<protein>
    <recommendedName>
        <fullName evidence="4">Katanin p60 ATPase-containing subunit A-like 1</fullName>
        <shortName evidence="4">Katanin p60 subunit A-like 1</shortName>
        <ecNumber evidence="4">5.6.1.1</ecNumber>
    </recommendedName>
    <alternativeName>
        <fullName evidence="4">p60 katanin-like 1</fullName>
    </alternativeName>
</protein>
<reference key="1">
    <citation type="submission" date="2011-03" db="EMBL/GenBank/DDBJ databases">
        <title>Version 3 of the genome sequence of Otolemur garnettii(Bushbaby).</title>
        <authorList>
            <consortium name="The Broad Institute Genome Sequencing Platform"/>
            <person name="Di Palma F."/>
            <person name="Johnson J."/>
            <person name="Lander E.S."/>
            <person name="Lindblad-Toh K."/>
            <person name="Jaffe D.B."/>
            <person name="Gnerre S."/>
            <person name="MacCallum I."/>
            <person name="Przybylski D."/>
            <person name="Ribeiro F.J."/>
            <person name="Burton J.N."/>
            <person name="Walker B.J."/>
            <person name="Sharpe T."/>
            <person name="Hall G."/>
        </authorList>
    </citation>
    <scope>NUCLEOTIDE SEQUENCE [LARGE SCALE GENOMIC DNA]</scope>
</reference>
<sequence length="490" mass="55207">MNLAEICDNAKKGREYALLGNYDSSMVYYQGVIQQIQRHCQSVRDPAVKGKWQQVRQELLEEYEQVKSIVSTLESFKIDKPPDFPVSCQDEPVRDPAVWPPPVPAEHRAPPQIRRSNREVRPLRKDMAGVGARGPVGRAHPISKSEKPSTSRDKDNRARGKDDKGRKNMQDGASDGEIPKFDGAGYDKDLIEALERDIVSRNPSIHWDDIADLEEAKKLLREAVVLPMWMPDFFKGIRRPWKGVLMVGPPGTGKTMLAKAVATECGTTFFNVSSSTLTSKYRGESEKLVRLLFEMARFYAPTTIFIDEIDSICSRRGTSDEHEASRRVKSELLIQMDGVGGALENDDPSKMVMVLAATNFPWDIDEALRRRLEKRIYIPLPTAKGRAELLKINLREVELDPDIQLEDIAEKIEGYSGADITNVCRDASLMAMRRRINGLSPEEIRALSKEELQMPVTKGDFELALKKIAKSVSAADLEKYEKWMVEFGSA</sequence>
<organism>
    <name type="scientific">Otolemur garnettii</name>
    <name type="common">Small-eared galago</name>
    <name type="synonym">Garnett's greater bushbaby</name>
    <dbReference type="NCBI Taxonomy" id="30611"/>
    <lineage>
        <taxon>Eukaryota</taxon>
        <taxon>Metazoa</taxon>
        <taxon>Chordata</taxon>
        <taxon>Craniata</taxon>
        <taxon>Vertebrata</taxon>
        <taxon>Euteleostomi</taxon>
        <taxon>Mammalia</taxon>
        <taxon>Eutheria</taxon>
        <taxon>Euarchontoglires</taxon>
        <taxon>Primates</taxon>
        <taxon>Strepsirrhini</taxon>
        <taxon>Lorisiformes</taxon>
        <taxon>Galagidae</taxon>
        <taxon>Otolemur</taxon>
    </lineage>
</organism>
<comment type="function">
    <text evidence="2 3">Regulates microtubule dynamics in Sertoli cells, a process that is essential for spermiogenesis and male fertility. Severs microtubules in an ATP-dependent manner, promoting rapid reorganization of cellular microtubule arrays (By similarity). Has microtubule-severing activity in vitro (By similarity).</text>
</comment>
<comment type="catalytic activity">
    <reaction evidence="4">
        <text>n ATP + n H2O + a microtubule = n ADP + n phosphate + (n+1) alpha/beta tubulin heterodimers.</text>
        <dbReference type="EC" id="5.6.1.1"/>
    </reaction>
</comment>
<comment type="subunit">
    <text evidence="3">Interacts with KATNB1 and KATNBL1.</text>
</comment>
<comment type="subcellular location">
    <subcellularLocation>
        <location evidence="4">Cytoplasm</location>
        <location evidence="4">Cytoskeleton</location>
    </subcellularLocation>
    <subcellularLocation>
        <location evidence="3">Cytoplasm</location>
    </subcellularLocation>
    <subcellularLocation>
        <location evidence="3">Cytoplasm</location>
        <location evidence="3">Cytoskeleton</location>
        <location evidence="3">Spindle pole</location>
    </subcellularLocation>
    <subcellularLocation>
        <location evidence="3">Cytoplasm</location>
        <location evidence="3">Cytoskeleton</location>
        <location evidence="3">Spindle</location>
    </subcellularLocation>
    <text evidence="2 3">Colocalizes with microtubules throughout the basal and adluminal compartments of Sertoli cells (By similarity). Localizes within the cytoplasm, partially overlapping with microtubules, in interphase and to the mitotic spindle and spindle poles during mitosis (By similarity).</text>
</comment>
<comment type="similarity">
    <text evidence="4">Belongs to the AAA ATPase family. Katanin p60 subunit A1 subfamily. A-like 1 sub-subfamily.</text>
</comment>
<accession>B4USW8</accession>
<proteinExistence type="inferred from homology"/>
<dbReference type="EC" id="5.6.1.1" evidence="4"/>
<dbReference type="EMBL" id="DP000875">
    <property type="protein sequence ID" value="ACG64309.1"/>
    <property type="molecule type" value="Genomic_DNA"/>
</dbReference>
<dbReference type="RefSeq" id="XP_003797655.1">
    <property type="nucleotide sequence ID" value="XM_003797607.3"/>
</dbReference>
<dbReference type="RefSeq" id="XP_023373519.1">
    <property type="nucleotide sequence ID" value="XM_023517751.1"/>
</dbReference>
<dbReference type="RefSeq" id="XP_023373520.1">
    <property type="nucleotide sequence ID" value="XM_023517752.1"/>
</dbReference>
<dbReference type="SMR" id="B4USW8"/>
<dbReference type="FunCoup" id="B4USW8">
    <property type="interactions" value="863"/>
</dbReference>
<dbReference type="STRING" id="30611.ENSOGAP00000010127"/>
<dbReference type="GeneID" id="100944651"/>
<dbReference type="KEGG" id="oga:100944651"/>
<dbReference type="CTD" id="84056"/>
<dbReference type="eggNOG" id="KOG0738">
    <property type="taxonomic scope" value="Eukaryota"/>
</dbReference>
<dbReference type="InParanoid" id="B4USW8"/>
<dbReference type="OrthoDB" id="5334845at2759"/>
<dbReference type="Proteomes" id="UP000005225">
    <property type="component" value="Unassembled WGS sequence"/>
</dbReference>
<dbReference type="GO" id="GO:0005813">
    <property type="term" value="C:centrosome"/>
    <property type="evidence" value="ECO:0007669"/>
    <property type="project" value="UniProtKB-UniRule"/>
</dbReference>
<dbReference type="GO" id="GO:0005737">
    <property type="term" value="C:cytoplasm"/>
    <property type="evidence" value="ECO:0000250"/>
    <property type="project" value="UniProtKB"/>
</dbReference>
<dbReference type="GO" id="GO:0005874">
    <property type="term" value="C:microtubule"/>
    <property type="evidence" value="ECO:0000250"/>
    <property type="project" value="UniProtKB"/>
</dbReference>
<dbReference type="GO" id="GO:0005819">
    <property type="term" value="C:spindle"/>
    <property type="evidence" value="ECO:0000250"/>
    <property type="project" value="UniProtKB"/>
</dbReference>
<dbReference type="GO" id="GO:0000922">
    <property type="term" value="C:spindle pole"/>
    <property type="evidence" value="ECO:0000250"/>
    <property type="project" value="UniProtKB"/>
</dbReference>
<dbReference type="GO" id="GO:0005524">
    <property type="term" value="F:ATP binding"/>
    <property type="evidence" value="ECO:0007669"/>
    <property type="project" value="UniProtKB-KW"/>
</dbReference>
<dbReference type="GO" id="GO:0016887">
    <property type="term" value="F:ATP hydrolysis activity"/>
    <property type="evidence" value="ECO:0007669"/>
    <property type="project" value="InterPro"/>
</dbReference>
<dbReference type="GO" id="GO:0008017">
    <property type="term" value="F:microtubule binding"/>
    <property type="evidence" value="ECO:0007669"/>
    <property type="project" value="UniProtKB-UniRule"/>
</dbReference>
<dbReference type="GO" id="GO:0008568">
    <property type="term" value="F:microtubule severing ATPase activity"/>
    <property type="evidence" value="ECO:0000250"/>
    <property type="project" value="UniProtKB"/>
</dbReference>
<dbReference type="GO" id="GO:0051013">
    <property type="term" value="P:microtubule severing"/>
    <property type="evidence" value="ECO:0000250"/>
    <property type="project" value="UniProtKB"/>
</dbReference>
<dbReference type="GO" id="GO:0007283">
    <property type="term" value="P:spermatogenesis"/>
    <property type="evidence" value="ECO:0007669"/>
    <property type="project" value="UniProtKB-UniRule"/>
</dbReference>
<dbReference type="CDD" id="cd21748">
    <property type="entry name" value="Kp60-NTD"/>
    <property type="match status" value="1"/>
</dbReference>
<dbReference type="CDD" id="cd19522">
    <property type="entry name" value="RecA-like_KTNA1"/>
    <property type="match status" value="1"/>
</dbReference>
<dbReference type="FunFam" id="1.10.8.60:FF:000025">
    <property type="entry name" value="Katanin p60 ATPase-containing subunit A1"/>
    <property type="match status" value="1"/>
</dbReference>
<dbReference type="FunFam" id="1.20.58.80:FF:000003">
    <property type="entry name" value="Katanin p60 ATPase-containing subunit A1"/>
    <property type="match status" value="1"/>
</dbReference>
<dbReference type="FunFam" id="3.40.50.300:FF:000159">
    <property type="entry name" value="Katanin p60 ATPase-containing subunit A1"/>
    <property type="match status" value="1"/>
</dbReference>
<dbReference type="Gene3D" id="1.10.8.60">
    <property type="match status" value="1"/>
</dbReference>
<dbReference type="Gene3D" id="3.40.50.300">
    <property type="entry name" value="P-loop containing nucleotide triphosphate hydrolases"/>
    <property type="match status" value="1"/>
</dbReference>
<dbReference type="Gene3D" id="1.20.58.80">
    <property type="entry name" value="Phosphotransferase system, lactose/cellobiose-type IIA subunit"/>
    <property type="match status" value="1"/>
</dbReference>
<dbReference type="HAMAP" id="MF_03023">
    <property type="entry name" value="Katanin_p60_A1"/>
    <property type="match status" value="1"/>
</dbReference>
<dbReference type="HAMAP" id="MF_03024">
    <property type="entry name" value="Katanin_p60_AL1"/>
    <property type="match status" value="1"/>
</dbReference>
<dbReference type="InterPro" id="IPR003593">
    <property type="entry name" value="AAA+_ATPase"/>
</dbReference>
<dbReference type="InterPro" id="IPR041569">
    <property type="entry name" value="AAA_lid_3"/>
</dbReference>
<dbReference type="InterPro" id="IPR003959">
    <property type="entry name" value="ATPase_AAA_core"/>
</dbReference>
<dbReference type="InterPro" id="IPR003960">
    <property type="entry name" value="ATPase_AAA_CS"/>
</dbReference>
<dbReference type="InterPro" id="IPR028596">
    <property type="entry name" value="KATNA1"/>
</dbReference>
<dbReference type="InterPro" id="IPR048611">
    <property type="entry name" value="KATNA1_MIT"/>
</dbReference>
<dbReference type="InterPro" id="IPR028594">
    <property type="entry name" value="Katnal1_chordates"/>
</dbReference>
<dbReference type="InterPro" id="IPR048612">
    <property type="entry name" value="KTNA1_AAA_dom"/>
</dbReference>
<dbReference type="InterPro" id="IPR050304">
    <property type="entry name" value="MT-severing_AAA_ATPase"/>
</dbReference>
<dbReference type="InterPro" id="IPR027417">
    <property type="entry name" value="P-loop_NTPase"/>
</dbReference>
<dbReference type="InterPro" id="IPR015415">
    <property type="entry name" value="Spast_Vps4_C"/>
</dbReference>
<dbReference type="PANTHER" id="PTHR23074">
    <property type="entry name" value="AAA DOMAIN-CONTAINING"/>
    <property type="match status" value="1"/>
</dbReference>
<dbReference type="PANTHER" id="PTHR23074:SF65">
    <property type="entry name" value="KATANIN P60 ATPASE-CONTAINING SUBUNIT A-LIKE 1"/>
    <property type="match status" value="1"/>
</dbReference>
<dbReference type="Pfam" id="PF00004">
    <property type="entry name" value="AAA"/>
    <property type="match status" value="1"/>
</dbReference>
<dbReference type="Pfam" id="PF17862">
    <property type="entry name" value="AAA_lid_3"/>
    <property type="match status" value="1"/>
</dbReference>
<dbReference type="Pfam" id="PF21126">
    <property type="entry name" value="KATNA1_MIT"/>
    <property type="match status" value="1"/>
</dbReference>
<dbReference type="Pfam" id="PF09336">
    <property type="entry name" value="Vps4_C"/>
    <property type="match status" value="1"/>
</dbReference>
<dbReference type="SMART" id="SM00382">
    <property type="entry name" value="AAA"/>
    <property type="match status" value="1"/>
</dbReference>
<dbReference type="SUPFAM" id="SSF52540">
    <property type="entry name" value="P-loop containing nucleoside triphosphate hydrolases"/>
    <property type="match status" value="1"/>
</dbReference>
<dbReference type="PROSITE" id="PS00674">
    <property type="entry name" value="AAA"/>
    <property type="match status" value="1"/>
</dbReference>
<feature type="chain" id="PRO_0000367123" description="Katanin p60 ATPase-containing subunit A-like 1">
    <location>
        <begin position="1"/>
        <end position="490"/>
    </location>
</feature>
<feature type="region of interest" description="Disordered" evidence="5">
    <location>
        <begin position="87"/>
        <end position="182"/>
    </location>
</feature>
<feature type="compositionally biased region" description="Basic and acidic residues" evidence="5">
    <location>
        <begin position="116"/>
        <end position="127"/>
    </location>
</feature>
<feature type="compositionally biased region" description="Low complexity" evidence="5">
    <location>
        <begin position="128"/>
        <end position="139"/>
    </location>
</feature>
<feature type="compositionally biased region" description="Basic and acidic residues" evidence="5">
    <location>
        <begin position="143"/>
        <end position="169"/>
    </location>
</feature>
<feature type="binding site" evidence="4">
    <location>
        <begin position="248"/>
        <end position="255"/>
    </location>
    <ligand>
        <name>ATP</name>
        <dbReference type="ChEBI" id="CHEBI:30616"/>
    </ligand>
</feature>
<feature type="modified residue" description="N-acetylmethionine" evidence="3">
    <location>
        <position position="1"/>
    </location>
</feature>
<feature type="modified residue" description="Phosphoserine" evidence="1">
    <location>
        <position position="174"/>
    </location>
</feature>
<name>KATL1_OTOGA</name>
<keyword id="KW-0007">Acetylation</keyword>
<keyword id="KW-0067">ATP-binding</keyword>
<keyword id="KW-0963">Cytoplasm</keyword>
<keyword id="KW-0206">Cytoskeleton</keyword>
<keyword id="KW-0413">Isomerase</keyword>
<keyword id="KW-0493">Microtubule</keyword>
<keyword id="KW-0547">Nucleotide-binding</keyword>
<keyword id="KW-0597">Phosphoprotein</keyword>
<keyword id="KW-1185">Reference proteome</keyword>
<gene>
    <name evidence="4" type="primary">KATNAL1</name>
</gene>
<evidence type="ECO:0000250" key="1">
    <source>
        <dbReference type="UniProtKB" id="Q5XIK7"/>
    </source>
</evidence>
<evidence type="ECO:0000250" key="2">
    <source>
        <dbReference type="UniProtKB" id="Q8K0T4"/>
    </source>
</evidence>
<evidence type="ECO:0000250" key="3">
    <source>
        <dbReference type="UniProtKB" id="Q9BW62"/>
    </source>
</evidence>
<evidence type="ECO:0000255" key="4">
    <source>
        <dbReference type="HAMAP-Rule" id="MF_03024"/>
    </source>
</evidence>
<evidence type="ECO:0000256" key="5">
    <source>
        <dbReference type="SAM" id="MobiDB-lite"/>
    </source>
</evidence>